<reference key="1">
    <citation type="journal article" date="1996" name="DNA Res.">
        <title>A 718-kb DNA sequence of the Escherichia coli K-12 genome corresponding to the 12.7-28.0 min region on the linkage map.</title>
        <authorList>
            <person name="Oshima T."/>
            <person name="Aiba H."/>
            <person name="Baba T."/>
            <person name="Fujita K."/>
            <person name="Hayashi K."/>
            <person name="Honjo A."/>
            <person name="Ikemoto K."/>
            <person name="Inada T."/>
            <person name="Itoh T."/>
            <person name="Kajihara M."/>
            <person name="Kanai K."/>
            <person name="Kashimoto K."/>
            <person name="Kimura S."/>
            <person name="Kitagawa M."/>
            <person name="Makino K."/>
            <person name="Masuda S."/>
            <person name="Miki T."/>
            <person name="Mizobuchi K."/>
            <person name="Mori H."/>
            <person name="Motomura K."/>
            <person name="Nakamura Y."/>
            <person name="Nashimoto H."/>
            <person name="Nishio Y."/>
            <person name="Saito N."/>
            <person name="Sampei G."/>
            <person name="Seki Y."/>
            <person name="Tagami H."/>
            <person name="Takemoto K."/>
            <person name="Wada C."/>
            <person name="Yamamoto Y."/>
            <person name="Yano M."/>
            <person name="Horiuchi T."/>
        </authorList>
    </citation>
    <scope>NUCLEOTIDE SEQUENCE [LARGE SCALE GENOMIC DNA]</scope>
    <source>
        <strain>K12 / W3110 / ATCC 27325 / DSM 5911</strain>
    </source>
</reference>
<reference key="2">
    <citation type="submission" date="1997-01" db="EMBL/GenBank/DDBJ databases">
        <title>Sequence of minutes 4-25 of Escherichia coli.</title>
        <authorList>
            <person name="Chung E."/>
            <person name="Allen E."/>
            <person name="Araujo R."/>
            <person name="Aparicio A.M."/>
            <person name="Davis K."/>
            <person name="Duncan M."/>
            <person name="Federspiel N."/>
            <person name="Hyman R."/>
            <person name="Kalman S."/>
            <person name="Komp C."/>
            <person name="Kurdi O."/>
            <person name="Lew H."/>
            <person name="Lin D."/>
            <person name="Namath A."/>
            <person name="Oefner P."/>
            <person name="Roberts D."/>
            <person name="Schramm S."/>
            <person name="Davis R.W."/>
        </authorList>
    </citation>
    <scope>NUCLEOTIDE SEQUENCE [LARGE SCALE GENOMIC DNA]</scope>
    <source>
        <strain>K12 / MG1655 / ATCC 47076</strain>
    </source>
</reference>
<reference key="3">
    <citation type="journal article" date="1997" name="Science">
        <title>The complete genome sequence of Escherichia coli K-12.</title>
        <authorList>
            <person name="Blattner F.R."/>
            <person name="Plunkett G. III"/>
            <person name="Bloch C.A."/>
            <person name="Perna N.T."/>
            <person name="Burland V."/>
            <person name="Riley M."/>
            <person name="Collado-Vides J."/>
            <person name="Glasner J.D."/>
            <person name="Rode C.K."/>
            <person name="Mayhew G.F."/>
            <person name="Gregor J."/>
            <person name="Davis N.W."/>
            <person name="Kirkpatrick H.A."/>
            <person name="Goeden M.A."/>
            <person name="Rose D.J."/>
            <person name="Mau B."/>
            <person name="Shao Y."/>
        </authorList>
    </citation>
    <scope>NUCLEOTIDE SEQUENCE [LARGE SCALE GENOMIC DNA]</scope>
    <source>
        <strain>K12 / MG1655 / ATCC 47076</strain>
    </source>
</reference>
<reference key="4">
    <citation type="journal article" date="2006" name="Mol. Syst. Biol.">
        <title>Highly accurate genome sequences of Escherichia coli K-12 strains MG1655 and W3110.</title>
        <authorList>
            <person name="Hayashi K."/>
            <person name="Morooka N."/>
            <person name="Yamamoto Y."/>
            <person name="Fujita K."/>
            <person name="Isono K."/>
            <person name="Choi S."/>
            <person name="Ohtsubo E."/>
            <person name="Baba T."/>
            <person name="Wanner B.L."/>
            <person name="Mori H."/>
            <person name="Horiuchi T."/>
        </authorList>
    </citation>
    <scope>NUCLEOTIDE SEQUENCE [LARGE SCALE GENOMIC DNA]</scope>
    <source>
        <strain>K12 / W3110 / ATCC 27325 / DSM 5911</strain>
    </source>
</reference>
<reference key="5">
    <citation type="submission" date="1994-06" db="EMBL/GenBank/DDBJ databases">
        <authorList>
            <person name="Lum D."/>
            <person name="Wallace B.J."/>
        </authorList>
    </citation>
    <scope>NUCLEOTIDE SEQUENCE [GENOMIC DNA] OF 1-123</scope>
    <source>
        <strain>K12 / BK9MDG</strain>
    </source>
</reference>
<reference key="6">
    <citation type="journal article" date="2001" name="J. Biol. Chem.">
        <title>The RihA, RihB, and RihC ribonucleoside hydrolases of Escherichia coli. Substrate specificity, gene expression, and regulation.</title>
        <authorList>
            <person name="Petersen C."/>
            <person name="Moeller L.B."/>
        </authorList>
    </citation>
    <scope>CHARACTERIZATION</scope>
</reference>
<dbReference type="EC" id="3.2.-.-"/>
<dbReference type="EMBL" id="U82598">
    <property type="protein sequence ID" value="AAB40852.1"/>
    <property type="molecule type" value="Genomic_DNA"/>
</dbReference>
<dbReference type="EMBL" id="U00096">
    <property type="protein sequence ID" value="AAC73752.1"/>
    <property type="molecule type" value="Genomic_DNA"/>
</dbReference>
<dbReference type="EMBL" id="AP009048">
    <property type="protein sequence ID" value="BAA35303.1"/>
    <property type="molecule type" value="Genomic_DNA"/>
</dbReference>
<dbReference type="EMBL" id="U10981">
    <property type="status" value="NOT_ANNOTATED_CDS"/>
    <property type="molecule type" value="Genomic_DNA"/>
</dbReference>
<dbReference type="PIR" id="A64800">
    <property type="entry name" value="A64800"/>
</dbReference>
<dbReference type="RefSeq" id="NP_415184.1">
    <property type="nucleotide sequence ID" value="NC_000913.3"/>
</dbReference>
<dbReference type="RefSeq" id="WP_001207520.1">
    <property type="nucleotide sequence ID" value="NZ_SSZK01000037.1"/>
</dbReference>
<dbReference type="PDB" id="1YOE">
    <property type="method" value="X-ray"/>
    <property type="resolution" value="1.78 A"/>
    <property type="chains" value="A=2-311"/>
</dbReference>
<dbReference type="PDB" id="3G5I">
    <property type="method" value="X-ray"/>
    <property type="resolution" value="2.10 A"/>
    <property type="chains" value="A/B/C/D=2-311"/>
</dbReference>
<dbReference type="PDBsum" id="1YOE"/>
<dbReference type="PDBsum" id="3G5I"/>
<dbReference type="SMR" id="P41409"/>
<dbReference type="BioGRID" id="4261645">
    <property type="interactions" value="33"/>
</dbReference>
<dbReference type="FunCoup" id="P41409">
    <property type="interactions" value="611"/>
</dbReference>
<dbReference type="IntAct" id="P41409">
    <property type="interactions" value="15"/>
</dbReference>
<dbReference type="STRING" id="511145.b0651"/>
<dbReference type="jPOST" id="P41409"/>
<dbReference type="PaxDb" id="511145-b0651"/>
<dbReference type="EnsemblBacteria" id="AAC73752">
    <property type="protein sequence ID" value="AAC73752"/>
    <property type="gene ID" value="b0651"/>
</dbReference>
<dbReference type="GeneID" id="945503"/>
<dbReference type="KEGG" id="ecj:JW0646"/>
<dbReference type="KEGG" id="eco:b0651"/>
<dbReference type="KEGG" id="ecoc:C3026_03255"/>
<dbReference type="PATRIC" id="fig|1411691.4.peg.1617"/>
<dbReference type="EchoBASE" id="EB2563"/>
<dbReference type="eggNOG" id="COG1957">
    <property type="taxonomic scope" value="Bacteria"/>
</dbReference>
<dbReference type="HOGENOM" id="CLU_036838_2_0_6"/>
<dbReference type="InParanoid" id="P41409"/>
<dbReference type="OMA" id="WVGVETK"/>
<dbReference type="OrthoDB" id="9797882at2"/>
<dbReference type="PhylomeDB" id="P41409"/>
<dbReference type="BioCyc" id="EcoCyc:G6358-MONOMER"/>
<dbReference type="BioCyc" id="MetaCyc:G6358-MONOMER"/>
<dbReference type="EvolutionaryTrace" id="P41409"/>
<dbReference type="PRO" id="PR:P41409"/>
<dbReference type="Proteomes" id="UP000000625">
    <property type="component" value="Chromosome"/>
</dbReference>
<dbReference type="GO" id="GO:0005829">
    <property type="term" value="C:cytosol"/>
    <property type="evidence" value="ECO:0000318"/>
    <property type="project" value="GO_Central"/>
</dbReference>
<dbReference type="GO" id="GO:0032991">
    <property type="term" value="C:protein-containing complex"/>
    <property type="evidence" value="ECO:0000314"/>
    <property type="project" value="EcoCyc"/>
</dbReference>
<dbReference type="GO" id="GO:0005509">
    <property type="term" value="F:calcium ion binding"/>
    <property type="evidence" value="ECO:0000314"/>
    <property type="project" value="EcoliWiki"/>
</dbReference>
<dbReference type="GO" id="GO:0042802">
    <property type="term" value="F:identical protein binding"/>
    <property type="evidence" value="ECO:0000314"/>
    <property type="project" value="EcoCyc"/>
</dbReference>
<dbReference type="GO" id="GO:0008477">
    <property type="term" value="F:purine nucleosidase activity"/>
    <property type="evidence" value="ECO:0000318"/>
    <property type="project" value="GO_Central"/>
</dbReference>
<dbReference type="GO" id="GO:0050263">
    <property type="term" value="F:ribosylpyrimidine nucleosidase activity"/>
    <property type="evidence" value="ECO:0000314"/>
    <property type="project" value="EcoCyc"/>
</dbReference>
<dbReference type="GO" id="GO:0045437">
    <property type="term" value="F:uridine nucleosidase activity"/>
    <property type="evidence" value="ECO:0000314"/>
    <property type="project" value="EcoCyc"/>
</dbReference>
<dbReference type="GO" id="GO:0015949">
    <property type="term" value="P:nucleobase-containing small molecule interconversion"/>
    <property type="evidence" value="ECO:0007669"/>
    <property type="project" value="InterPro"/>
</dbReference>
<dbReference type="GO" id="GO:0051289">
    <property type="term" value="P:protein homotetramerization"/>
    <property type="evidence" value="ECO:0000314"/>
    <property type="project" value="EcoCyc"/>
</dbReference>
<dbReference type="GO" id="GO:0006152">
    <property type="term" value="P:purine nucleoside catabolic process"/>
    <property type="evidence" value="ECO:0000318"/>
    <property type="project" value="GO_Central"/>
</dbReference>
<dbReference type="GO" id="GO:0006206">
    <property type="term" value="P:pyrimidine nucleobase metabolic process"/>
    <property type="evidence" value="ECO:0007669"/>
    <property type="project" value="UniProtKB-UniRule"/>
</dbReference>
<dbReference type="GO" id="GO:0046133">
    <property type="term" value="P:pyrimidine ribonucleoside catabolic process"/>
    <property type="evidence" value="ECO:0000315"/>
    <property type="project" value="EcoCyc"/>
</dbReference>
<dbReference type="CDD" id="cd02651">
    <property type="entry name" value="nuc_hydro_IU_UC_XIUA"/>
    <property type="match status" value="1"/>
</dbReference>
<dbReference type="FunFam" id="3.90.245.10:FF:000001">
    <property type="entry name" value="Pyrimidine-specific ribonucleoside hydrolase RihA"/>
    <property type="match status" value="1"/>
</dbReference>
<dbReference type="Gene3D" id="3.90.245.10">
    <property type="entry name" value="Ribonucleoside hydrolase-like"/>
    <property type="match status" value="1"/>
</dbReference>
<dbReference type="HAMAP" id="MF_01431">
    <property type="entry name" value="Pyrim_hydro_RihA"/>
    <property type="match status" value="1"/>
</dbReference>
<dbReference type="InterPro" id="IPR015910">
    <property type="entry name" value="I/U_nuclsd_hydro_CS"/>
</dbReference>
<dbReference type="InterPro" id="IPR001910">
    <property type="entry name" value="Inosine/uridine_hydrolase_dom"/>
</dbReference>
<dbReference type="InterPro" id="IPR023186">
    <property type="entry name" value="IUNH"/>
</dbReference>
<dbReference type="InterPro" id="IPR022975">
    <property type="entry name" value="Pyrim_hydro_RihA"/>
</dbReference>
<dbReference type="InterPro" id="IPR036452">
    <property type="entry name" value="Ribo_hydro-like"/>
</dbReference>
<dbReference type="NCBIfam" id="NF007761">
    <property type="entry name" value="PRK10443.1"/>
    <property type="match status" value="1"/>
</dbReference>
<dbReference type="PANTHER" id="PTHR12304">
    <property type="entry name" value="INOSINE-URIDINE PREFERRING NUCLEOSIDE HYDROLASE"/>
    <property type="match status" value="1"/>
</dbReference>
<dbReference type="PANTHER" id="PTHR12304:SF4">
    <property type="entry name" value="URIDINE NUCLEOSIDASE"/>
    <property type="match status" value="1"/>
</dbReference>
<dbReference type="Pfam" id="PF01156">
    <property type="entry name" value="IU_nuc_hydro"/>
    <property type="match status" value="1"/>
</dbReference>
<dbReference type="SUPFAM" id="SSF53590">
    <property type="entry name" value="Nucleoside hydrolase"/>
    <property type="match status" value="1"/>
</dbReference>
<dbReference type="PROSITE" id="PS01247">
    <property type="entry name" value="IUNH"/>
    <property type="match status" value="1"/>
</dbReference>
<proteinExistence type="evidence at protein level"/>
<evidence type="ECO:0000250" key="1"/>
<evidence type="ECO:0000305" key="2"/>
<evidence type="ECO:0007829" key="3">
    <source>
        <dbReference type="PDB" id="1YOE"/>
    </source>
</evidence>
<evidence type="ECO:0007829" key="4">
    <source>
        <dbReference type="PDB" id="3G5I"/>
    </source>
</evidence>
<organism>
    <name type="scientific">Escherichia coli (strain K12)</name>
    <dbReference type="NCBI Taxonomy" id="83333"/>
    <lineage>
        <taxon>Bacteria</taxon>
        <taxon>Pseudomonadati</taxon>
        <taxon>Pseudomonadota</taxon>
        <taxon>Gammaproteobacteria</taxon>
        <taxon>Enterobacterales</taxon>
        <taxon>Enterobacteriaceae</taxon>
        <taxon>Escherichia</taxon>
    </lineage>
</organism>
<gene>
    <name type="primary">rihA</name>
    <name type="synonym">ybeK</name>
    <name type="ordered locus">b0651</name>
    <name type="ordered locus">JW0646</name>
</gene>
<keyword id="KW-0002">3D-structure</keyword>
<keyword id="KW-0326">Glycosidase</keyword>
<keyword id="KW-0378">Hydrolase</keyword>
<keyword id="KW-1185">Reference proteome</keyword>
<feature type="chain" id="PRO_0000206813" description="Pyrimidine-specific ribonucleoside hydrolase RihA">
    <location>
        <begin position="1"/>
        <end position="311"/>
    </location>
</feature>
<feature type="active site" evidence="1">
    <location>
        <position position="240"/>
    </location>
</feature>
<feature type="strand" evidence="3">
    <location>
        <begin position="3"/>
        <end position="9"/>
    </location>
</feature>
<feature type="helix" evidence="3">
    <location>
        <begin position="13"/>
        <end position="23"/>
    </location>
</feature>
<feature type="strand" evidence="3">
    <location>
        <begin position="28"/>
        <end position="35"/>
    </location>
</feature>
<feature type="strand" evidence="3">
    <location>
        <begin position="37"/>
        <end position="40"/>
    </location>
</feature>
<feature type="helix" evidence="3">
    <location>
        <begin position="42"/>
        <end position="55"/>
    </location>
</feature>
<feature type="strand" evidence="3">
    <location>
        <begin position="63"/>
        <end position="65"/>
    </location>
</feature>
<feature type="strand" evidence="3">
    <location>
        <begin position="71"/>
        <end position="73"/>
    </location>
</feature>
<feature type="turn" evidence="4">
    <location>
        <begin position="79"/>
        <end position="81"/>
    </location>
</feature>
<feature type="turn" evidence="4">
    <location>
        <begin position="83"/>
        <end position="85"/>
    </location>
</feature>
<feature type="helix" evidence="3">
    <location>
        <begin position="104"/>
        <end position="114"/>
    </location>
</feature>
<feature type="strand" evidence="3">
    <location>
        <begin position="119"/>
        <end position="123"/>
    </location>
</feature>
<feature type="helix" evidence="3">
    <location>
        <begin position="128"/>
        <end position="136"/>
    </location>
</feature>
<feature type="helix" evidence="3">
    <location>
        <begin position="138"/>
        <end position="143"/>
    </location>
</feature>
<feature type="strand" evidence="3">
    <location>
        <begin position="144"/>
        <end position="150"/>
    </location>
</feature>
<feature type="strand" evidence="3">
    <location>
        <begin position="158"/>
        <end position="162"/>
    </location>
</feature>
<feature type="helix" evidence="3">
    <location>
        <begin position="165"/>
        <end position="169"/>
    </location>
</feature>
<feature type="helix" evidence="3">
    <location>
        <begin position="171"/>
        <end position="178"/>
    </location>
</feature>
<feature type="strand" evidence="3">
    <location>
        <begin position="180"/>
        <end position="182"/>
    </location>
</feature>
<feature type="strand" evidence="3">
    <location>
        <begin position="184"/>
        <end position="187"/>
    </location>
</feature>
<feature type="helix" evidence="3">
    <location>
        <begin position="189"/>
        <end position="192"/>
    </location>
</feature>
<feature type="strand" evidence="3">
    <location>
        <begin position="195"/>
        <end position="197"/>
    </location>
</feature>
<feature type="helix" evidence="3">
    <location>
        <begin position="199"/>
        <end position="208"/>
    </location>
</feature>
<feature type="helix" evidence="3">
    <location>
        <begin position="211"/>
        <end position="224"/>
    </location>
</feature>
<feature type="strand" evidence="3">
    <location>
        <begin position="235"/>
        <end position="238"/>
    </location>
</feature>
<feature type="helix" evidence="3">
    <location>
        <begin position="242"/>
        <end position="249"/>
    </location>
</feature>
<feature type="helix" evidence="3">
    <location>
        <begin position="251"/>
        <end position="253"/>
    </location>
</feature>
<feature type="strand" evidence="3">
    <location>
        <begin position="254"/>
        <end position="259"/>
    </location>
</feature>
<feature type="strand" evidence="3">
    <location>
        <begin position="261"/>
        <end position="263"/>
    </location>
</feature>
<feature type="strand" evidence="3">
    <location>
        <begin position="274"/>
        <end position="276"/>
    </location>
</feature>
<feature type="strand" evidence="3">
    <location>
        <begin position="288"/>
        <end position="294"/>
    </location>
</feature>
<feature type="helix" evidence="3">
    <location>
        <begin position="296"/>
        <end position="307"/>
    </location>
</feature>
<feature type="helix" evidence="3">
    <location>
        <begin position="308"/>
        <end position="310"/>
    </location>
</feature>
<sequence length="311" mass="33823">MALPILLDCDPGHDDAIAIVLALASPELDVKAITSSAGNQTPEKTLRNVLRMLTLLNRTDIPVAGGAVKPLMRELIIADNVHGESGLDGPALPEPTFAPQNCTAVELMAKTLRESAEPVTIVSTGPQTNVALLLNSHPELHSKIARIVIMGGAMGLGNWTPAAEFNIYVDPEAAEIVFQSGIPVVMAGLDVTHKAQIHVEDTERFRAIGNPVSTIVAELLDFFLEYHKDEKWGFVGAPLHDPCTIAWLLKPELFTSVERWVGVETQGKYTQGMTVVDYYYLTGNKPNATVMVDVDRQGFVDLLADRLKFYA</sequence>
<protein>
    <recommendedName>
        <fullName>Pyrimidine-specific ribonucleoside hydrolase RihA</fullName>
        <ecNumber>3.2.-.-</ecNumber>
    </recommendedName>
    <alternativeName>
        <fullName>Cytidine/uridine-specific hydrolase</fullName>
    </alternativeName>
</protein>
<name>RIHA_ECOLI</name>
<comment type="function">
    <text>Hydrolyzes with equal efficiency cytidine or uridine to ribose and cytosine or uracil, respectively.</text>
</comment>
<comment type="activity regulation">
    <text>Subject to catabolite repression.</text>
</comment>
<comment type="miscellaneous">
    <text>Strictly specific for ribonucleosides.</text>
</comment>
<comment type="similarity">
    <text evidence="2">Belongs to the IUNH family. RihA subfamily.</text>
</comment>
<accession>P41409</accession>
<accession>P77738</accession>